<dbReference type="EMBL" id="Y09476">
    <property type="protein sequence ID" value="CAA70666.1"/>
    <property type="molecule type" value="Genomic_DNA"/>
</dbReference>
<dbReference type="EMBL" id="AL009126">
    <property type="protein sequence ID" value="CAB12942.1"/>
    <property type="molecule type" value="Genomic_DNA"/>
</dbReference>
<dbReference type="PIR" id="D69840">
    <property type="entry name" value="D69840"/>
</dbReference>
<dbReference type="RefSeq" id="NP_388983.1">
    <property type="nucleotide sequence ID" value="NC_000964.3"/>
</dbReference>
<dbReference type="RefSeq" id="WP_003233034.1">
    <property type="nucleotide sequence ID" value="NZ_OZ025638.1"/>
</dbReference>
<dbReference type="SMR" id="O06746"/>
<dbReference type="FunCoup" id="O06746">
    <property type="interactions" value="178"/>
</dbReference>
<dbReference type="STRING" id="224308.BSU11020"/>
<dbReference type="jPOST" id="O06746"/>
<dbReference type="PaxDb" id="224308-BSU11020"/>
<dbReference type="EnsemblBacteria" id="CAB12942">
    <property type="protein sequence ID" value="CAB12942"/>
    <property type="gene ID" value="BSU_11020"/>
</dbReference>
<dbReference type="GeneID" id="936375"/>
<dbReference type="KEGG" id="bsu:BSU11020"/>
<dbReference type="PATRIC" id="fig|224308.179.peg.1184"/>
<dbReference type="eggNOG" id="COG1666">
    <property type="taxonomic scope" value="Bacteria"/>
</dbReference>
<dbReference type="InParanoid" id="O06746"/>
<dbReference type="OrthoDB" id="9801447at2"/>
<dbReference type="PhylomeDB" id="O06746"/>
<dbReference type="BioCyc" id="BSUB:BSU11020-MONOMER"/>
<dbReference type="Proteomes" id="UP000001570">
    <property type="component" value="Chromosome"/>
</dbReference>
<dbReference type="GO" id="GO:0005829">
    <property type="term" value="C:cytosol"/>
    <property type="evidence" value="ECO:0000318"/>
    <property type="project" value="GO_Central"/>
</dbReference>
<dbReference type="GO" id="GO:0000166">
    <property type="term" value="F:nucleotide binding"/>
    <property type="evidence" value="ECO:0000318"/>
    <property type="project" value="GO_Central"/>
</dbReference>
<dbReference type="CDD" id="cd11740">
    <property type="entry name" value="YajQ_like"/>
    <property type="match status" value="1"/>
</dbReference>
<dbReference type="FunFam" id="3.30.70.990:FF:000002">
    <property type="entry name" value="UPF0234 protein LEP1GSC067_4943"/>
    <property type="match status" value="1"/>
</dbReference>
<dbReference type="FunFam" id="3.30.70.860:FF:000003">
    <property type="entry name" value="UPF0234 protein YBT020_06460"/>
    <property type="match status" value="1"/>
</dbReference>
<dbReference type="Gene3D" id="3.30.70.860">
    <property type="match status" value="1"/>
</dbReference>
<dbReference type="Gene3D" id="3.30.70.990">
    <property type="entry name" value="YajQ-like, domain 2"/>
    <property type="match status" value="1"/>
</dbReference>
<dbReference type="HAMAP" id="MF_00632">
    <property type="entry name" value="YajQ"/>
    <property type="match status" value="1"/>
</dbReference>
<dbReference type="InterPro" id="IPR007551">
    <property type="entry name" value="DUF520"/>
</dbReference>
<dbReference type="InterPro" id="IPR035571">
    <property type="entry name" value="UPF0234-like_C"/>
</dbReference>
<dbReference type="InterPro" id="IPR035570">
    <property type="entry name" value="UPF0234_N"/>
</dbReference>
<dbReference type="InterPro" id="IPR036183">
    <property type="entry name" value="YajQ-like_sf"/>
</dbReference>
<dbReference type="NCBIfam" id="NF003819">
    <property type="entry name" value="PRK05412.1"/>
    <property type="match status" value="1"/>
</dbReference>
<dbReference type="PANTHER" id="PTHR30476">
    <property type="entry name" value="UPF0234 PROTEIN YAJQ"/>
    <property type="match status" value="1"/>
</dbReference>
<dbReference type="PANTHER" id="PTHR30476:SF0">
    <property type="entry name" value="UPF0234 PROTEIN YAJQ"/>
    <property type="match status" value="1"/>
</dbReference>
<dbReference type="Pfam" id="PF04461">
    <property type="entry name" value="DUF520"/>
    <property type="match status" value="1"/>
</dbReference>
<dbReference type="SUPFAM" id="SSF89963">
    <property type="entry name" value="YajQ-like"/>
    <property type="match status" value="2"/>
</dbReference>
<reference key="1">
    <citation type="journal article" date="1997" name="Microbiology">
        <title>A Bacillus subtilis chromosome segment at the 100 degrees to 102 degrees position encoding 11 membrane proteins.</title>
        <authorList>
            <person name="Roche B."/>
            <person name="Autret S."/>
            <person name="Levine A."/>
            <person name="Vannier F."/>
            <person name="Medina N."/>
            <person name="Seror S.J."/>
        </authorList>
    </citation>
    <scope>NUCLEOTIDE SEQUENCE [GENOMIC DNA]</scope>
    <source>
        <strain>168</strain>
    </source>
</reference>
<reference key="2">
    <citation type="journal article" date="1997" name="Nature">
        <title>The complete genome sequence of the Gram-positive bacterium Bacillus subtilis.</title>
        <authorList>
            <person name="Kunst F."/>
            <person name="Ogasawara N."/>
            <person name="Moszer I."/>
            <person name="Albertini A.M."/>
            <person name="Alloni G."/>
            <person name="Azevedo V."/>
            <person name="Bertero M.G."/>
            <person name="Bessieres P."/>
            <person name="Bolotin A."/>
            <person name="Borchert S."/>
            <person name="Borriss R."/>
            <person name="Boursier L."/>
            <person name="Brans A."/>
            <person name="Braun M."/>
            <person name="Brignell S.C."/>
            <person name="Bron S."/>
            <person name="Brouillet S."/>
            <person name="Bruschi C.V."/>
            <person name="Caldwell B."/>
            <person name="Capuano V."/>
            <person name="Carter N.M."/>
            <person name="Choi S.-K."/>
            <person name="Codani J.-J."/>
            <person name="Connerton I.F."/>
            <person name="Cummings N.J."/>
            <person name="Daniel R.A."/>
            <person name="Denizot F."/>
            <person name="Devine K.M."/>
            <person name="Duesterhoeft A."/>
            <person name="Ehrlich S.D."/>
            <person name="Emmerson P.T."/>
            <person name="Entian K.-D."/>
            <person name="Errington J."/>
            <person name="Fabret C."/>
            <person name="Ferrari E."/>
            <person name="Foulger D."/>
            <person name="Fritz C."/>
            <person name="Fujita M."/>
            <person name="Fujita Y."/>
            <person name="Fuma S."/>
            <person name="Galizzi A."/>
            <person name="Galleron N."/>
            <person name="Ghim S.-Y."/>
            <person name="Glaser P."/>
            <person name="Goffeau A."/>
            <person name="Golightly E.J."/>
            <person name="Grandi G."/>
            <person name="Guiseppi G."/>
            <person name="Guy B.J."/>
            <person name="Haga K."/>
            <person name="Haiech J."/>
            <person name="Harwood C.R."/>
            <person name="Henaut A."/>
            <person name="Hilbert H."/>
            <person name="Holsappel S."/>
            <person name="Hosono S."/>
            <person name="Hullo M.-F."/>
            <person name="Itaya M."/>
            <person name="Jones L.-M."/>
            <person name="Joris B."/>
            <person name="Karamata D."/>
            <person name="Kasahara Y."/>
            <person name="Klaerr-Blanchard M."/>
            <person name="Klein C."/>
            <person name="Kobayashi Y."/>
            <person name="Koetter P."/>
            <person name="Koningstein G."/>
            <person name="Krogh S."/>
            <person name="Kumano M."/>
            <person name="Kurita K."/>
            <person name="Lapidus A."/>
            <person name="Lardinois S."/>
            <person name="Lauber J."/>
            <person name="Lazarevic V."/>
            <person name="Lee S.-M."/>
            <person name="Levine A."/>
            <person name="Liu H."/>
            <person name="Masuda S."/>
            <person name="Mauel C."/>
            <person name="Medigue C."/>
            <person name="Medina N."/>
            <person name="Mellado R.P."/>
            <person name="Mizuno M."/>
            <person name="Moestl D."/>
            <person name="Nakai S."/>
            <person name="Noback M."/>
            <person name="Noone D."/>
            <person name="O'Reilly M."/>
            <person name="Ogawa K."/>
            <person name="Ogiwara A."/>
            <person name="Oudega B."/>
            <person name="Park S.-H."/>
            <person name="Parro V."/>
            <person name="Pohl T.M."/>
            <person name="Portetelle D."/>
            <person name="Porwollik S."/>
            <person name="Prescott A.M."/>
            <person name="Presecan E."/>
            <person name="Pujic P."/>
            <person name="Purnelle B."/>
            <person name="Rapoport G."/>
            <person name="Rey M."/>
            <person name="Reynolds S."/>
            <person name="Rieger M."/>
            <person name="Rivolta C."/>
            <person name="Rocha E."/>
            <person name="Roche B."/>
            <person name="Rose M."/>
            <person name="Sadaie Y."/>
            <person name="Sato T."/>
            <person name="Scanlan E."/>
            <person name="Schleich S."/>
            <person name="Schroeter R."/>
            <person name="Scoffone F."/>
            <person name="Sekiguchi J."/>
            <person name="Sekowska A."/>
            <person name="Seror S.J."/>
            <person name="Serror P."/>
            <person name="Shin B.-S."/>
            <person name="Soldo B."/>
            <person name="Sorokin A."/>
            <person name="Tacconi E."/>
            <person name="Takagi T."/>
            <person name="Takahashi H."/>
            <person name="Takemaru K."/>
            <person name="Takeuchi M."/>
            <person name="Tamakoshi A."/>
            <person name="Tanaka T."/>
            <person name="Terpstra P."/>
            <person name="Tognoni A."/>
            <person name="Tosato V."/>
            <person name="Uchiyama S."/>
            <person name="Vandenbol M."/>
            <person name="Vannier F."/>
            <person name="Vassarotti A."/>
            <person name="Viari A."/>
            <person name="Wambutt R."/>
            <person name="Wedler E."/>
            <person name="Wedler H."/>
            <person name="Weitzenegger T."/>
            <person name="Winters P."/>
            <person name="Wipat A."/>
            <person name="Yamamoto H."/>
            <person name="Yamane K."/>
            <person name="Yasumoto K."/>
            <person name="Yata K."/>
            <person name="Yoshida K."/>
            <person name="Yoshikawa H.-F."/>
            <person name="Zumstein E."/>
            <person name="Yoshikawa H."/>
            <person name="Danchin A."/>
        </authorList>
    </citation>
    <scope>NUCLEOTIDE SEQUENCE [LARGE SCALE GENOMIC DNA]</scope>
    <source>
        <strain>168</strain>
    </source>
</reference>
<name>YITK_BACSU</name>
<accession>O06746</accession>
<feature type="chain" id="PRO_0000106173" description="Nucleotide-binding protein BSU11020">
    <location>
        <begin position="1"/>
        <end position="163"/>
    </location>
</feature>
<proteinExistence type="inferred from homology"/>
<keyword id="KW-0547">Nucleotide-binding</keyword>
<keyword id="KW-1185">Reference proteome</keyword>
<organism>
    <name type="scientific">Bacillus subtilis (strain 168)</name>
    <dbReference type="NCBI Taxonomy" id="224308"/>
    <lineage>
        <taxon>Bacteria</taxon>
        <taxon>Bacillati</taxon>
        <taxon>Bacillota</taxon>
        <taxon>Bacilli</taxon>
        <taxon>Bacillales</taxon>
        <taxon>Bacillaceae</taxon>
        <taxon>Bacillus</taxon>
    </lineage>
</organism>
<evidence type="ECO:0000255" key="1">
    <source>
        <dbReference type="HAMAP-Rule" id="MF_00632"/>
    </source>
</evidence>
<sequence length="163" mass="18202">MAKESSFDIVSKVELPEVQNAIQIALKEISTRYDFKGSKSDISLDKEELVLVSDDEFKLSQLKDVLVSKLIKRNVPTKNIDYGKVENASGGTVRQRAKLVQGIDKDNAKKINTIIKNSGLKVKSQVQDDQVRVTGKNKDDLQQIISAVRGADLPIDVQFINFR</sequence>
<comment type="function">
    <text evidence="1">Nucleotide-binding protein.</text>
</comment>
<comment type="similarity">
    <text evidence="1">Belongs to the YajQ family.</text>
</comment>
<protein>
    <recommendedName>
        <fullName evidence="1">Nucleotide-binding protein BSU11020</fullName>
    </recommendedName>
</protein>
<gene>
    <name type="primary">yitK</name>
    <name type="ordered locus">BSU11020</name>
</gene>